<keyword id="KW-0150">Chloroplast</keyword>
<keyword id="KW-0903">Direct protein sequencing</keyword>
<keyword id="KW-0934">Plastid</keyword>
<keyword id="KW-1185">Reference proteome</keyword>
<keyword id="KW-0687">Ribonucleoprotein</keyword>
<keyword id="KW-0689">Ribosomal protein</keyword>
<keyword id="KW-0809">Transit peptide</keyword>
<evidence type="ECO:0000269" key="1">
    <source>
    </source>
</evidence>
<evidence type="ECO:0000305" key="2"/>
<dbReference type="EMBL" id="X68078">
    <property type="protein sequence ID" value="CAA48211.1"/>
    <property type="molecule type" value="mRNA"/>
</dbReference>
<dbReference type="RefSeq" id="XP_016486433.1">
    <property type="nucleotide sequence ID" value="XM_016630947.1"/>
</dbReference>
<dbReference type="SMR" id="P30956"/>
<dbReference type="STRING" id="4097.P30956"/>
<dbReference type="PaxDb" id="4097-P30956"/>
<dbReference type="KEGG" id="nta:107806723"/>
<dbReference type="OMA" id="WEAGNRF"/>
<dbReference type="OrthoDB" id="361870at2759"/>
<dbReference type="PhylomeDB" id="P30956"/>
<dbReference type="Proteomes" id="UP000084051">
    <property type="component" value="Unplaced"/>
</dbReference>
<dbReference type="GO" id="GO:0009507">
    <property type="term" value="C:chloroplast"/>
    <property type="evidence" value="ECO:0007669"/>
    <property type="project" value="UniProtKB-SubCell"/>
</dbReference>
<dbReference type="GO" id="GO:1990904">
    <property type="term" value="C:ribonucleoprotein complex"/>
    <property type="evidence" value="ECO:0007669"/>
    <property type="project" value="UniProtKB-KW"/>
</dbReference>
<dbReference type="GO" id="GO:0005840">
    <property type="term" value="C:ribosome"/>
    <property type="evidence" value="ECO:0007669"/>
    <property type="project" value="UniProtKB-KW"/>
</dbReference>
<dbReference type="GO" id="GO:0003735">
    <property type="term" value="F:structural constituent of ribosome"/>
    <property type="evidence" value="ECO:0000318"/>
    <property type="project" value="GO_Central"/>
</dbReference>
<dbReference type="GO" id="GO:0006412">
    <property type="term" value="P:translation"/>
    <property type="evidence" value="ECO:0007669"/>
    <property type="project" value="InterPro"/>
</dbReference>
<dbReference type="FunFam" id="2.30.170.40:FF:000005">
    <property type="entry name" value="50S ribosomal L28, chloroplastic"/>
    <property type="match status" value="1"/>
</dbReference>
<dbReference type="Gene3D" id="2.30.170.40">
    <property type="entry name" value="Ribosomal protein L28/L24"/>
    <property type="match status" value="1"/>
</dbReference>
<dbReference type="HAMAP" id="MF_00373">
    <property type="entry name" value="Ribosomal_bL28"/>
    <property type="match status" value="1"/>
</dbReference>
<dbReference type="InterPro" id="IPR026569">
    <property type="entry name" value="Ribosomal_bL28"/>
</dbReference>
<dbReference type="InterPro" id="IPR034704">
    <property type="entry name" value="Ribosomal_bL28/bL31-like_sf"/>
</dbReference>
<dbReference type="InterPro" id="IPR001383">
    <property type="entry name" value="Ribosomal_bL28_bact-type"/>
</dbReference>
<dbReference type="InterPro" id="IPR037147">
    <property type="entry name" value="Ribosomal_bL28_sf"/>
</dbReference>
<dbReference type="NCBIfam" id="TIGR00009">
    <property type="entry name" value="L28"/>
    <property type="match status" value="1"/>
</dbReference>
<dbReference type="PANTHER" id="PTHR13528">
    <property type="entry name" value="39S RIBOSOMAL PROTEIN L28, MITOCHONDRIAL"/>
    <property type="match status" value="1"/>
</dbReference>
<dbReference type="PANTHER" id="PTHR13528:SF2">
    <property type="entry name" value="LARGE RIBOSOMAL SUBUNIT PROTEIN BL28M"/>
    <property type="match status" value="1"/>
</dbReference>
<dbReference type="Pfam" id="PF00830">
    <property type="entry name" value="Ribosomal_L28"/>
    <property type="match status" value="1"/>
</dbReference>
<dbReference type="SUPFAM" id="SSF143800">
    <property type="entry name" value="L28p-like"/>
    <property type="match status" value="1"/>
</dbReference>
<accession>P30956</accession>
<name>RK28_TOBAC</name>
<protein>
    <recommendedName>
        <fullName evidence="2">Large ribosomal subunit protein bL28c</fullName>
    </recommendedName>
    <alternativeName>
        <fullName>50S ribosomal protein L28, chloroplastic</fullName>
    </alternativeName>
    <alternativeName>
        <fullName>CL28</fullName>
    </alternativeName>
</protein>
<comment type="subunit">
    <text>Part of the 50S ribosomal subunit.</text>
</comment>
<comment type="subcellular location">
    <subcellularLocation>
        <location>Plastid</location>
        <location>Chloroplast</location>
    </subcellularLocation>
</comment>
<comment type="similarity">
    <text evidence="2">Belongs to the bacterial ribosomal protein bL28 family.</text>
</comment>
<feature type="transit peptide" description="Chloroplast" evidence="1">
    <location>
        <begin position="1"/>
        <end position="74"/>
    </location>
</feature>
<feature type="chain" id="PRO_0000030505" description="Large ribosomal subunit protein bL28c">
    <location>
        <begin position="75"/>
        <end position="151"/>
    </location>
</feature>
<organism>
    <name type="scientific">Nicotiana tabacum</name>
    <name type="common">Common tobacco</name>
    <dbReference type="NCBI Taxonomy" id="4097"/>
    <lineage>
        <taxon>Eukaryota</taxon>
        <taxon>Viridiplantae</taxon>
        <taxon>Streptophyta</taxon>
        <taxon>Embryophyta</taxon>
        <taxon>Tracheophyta</taxon>
        <taxon>Spermatophyta</taxon>
        <taxon>Magnoliopsida</taxon>
        <taxon>eudicotyledons</taxon>
        <taxon>Gunneridae</taxon>
        <taxon>Pentapetalae</taxon>
        <taxon>asterids</taxon>
        <taxon>lamiids</taxon>
        <taxon>Solanales</taxon>
        <taxon>Solanaceae</taxon>
        <taxon>Nicotianoideae</taxon>
        <taxon>Nicotianeae</taxon>
        <taxon>Nicotiana</taxon>
    </lineage>
</organism>
<proteinExistence type="evidence at protein level"/>
<reference key="1">
    <citation type="journal article" date="1992" name="FEBS Lett.">
        <title>Tobacco chloroplast ribosomes contain a homologue of E. coli ribosomal protein L28.</title>
        <authorList>
            <person name="Yokoi F."/>
            <person name="Sugiura M."/>
        </authorList>
    </citation>
    <scope>NUCLEOTIDE SEQUENCE [MRNA]</scope>
    <scope>PROTEIN SEQUENCE OF 75-95</scope>
    <source>
        <strain>cv. Bright Yellow 4</strain>
        <tissue>Leaf</tissue>
    </source>
</reference>
<gene>
    <name type="primary">RPL28</name>
</gene>
<sequence length="151" mass="16698">MATMVAGISLRGPVMSSHRTFSVTKRASLPQSKLSSELSFVTSQLSGLKISSTHFISSSAPLSVPFKPSLQPVARRICPFTGKKSNRANKVSHSNHKTKKLQFVNLQYKRIWWEAGKRYVKLRLSTKAIKTIEKNGLDAVAKKAGIDLSKK</sequence>